<reference key="1">
    <citation type="journal article" date="2001" name="J. Neurosci.">
        <title>Serotonin activates S6 kinase in a rapamycin-sensitive manner in Aplysia synaptosomes.</title>
        <authorList>
            <person name="Khan A."/>
            <person name="Pepio A.M."/>
            <person name="Sossin W.S."/>
        </authorList>
    </citation>
    <scope>NUCLEOTIDE SEQUENCE [MRNA]</scope>
</reference>
<gene>
    <name type="primary">RPS6</name>
</gene>
<name>RS6_APLCA</name>
<comment type="function">
    <text evidence="1">Component of the 40S small ribosomal subunit (By similarity). Plays an important role in controlling cell growth and proliferation through the selective translation of particular classes of mRNA (By similarity).</text>
</comment>
<comment type="PTM">
    <text evidence="1">Ribosomal protein S6 is the major substrate of protein kinases in eukaryote ribosomes.</text>
</comment>
<comment type="similarity">
    <text evidence="3">Belongs to the eukaryotic ribosomal protein eS6 family.</text>
</comment>
<proteinExistence type="evidence at transcript level"/>
<dbReference type="EMBL" id="AF294917">
    <property type="protein sequence ID" value="AAG60623.1"/>
    <property type="molecule type" value="mRNA"/>
</dbReference>
<dbReference type="RefSeq" id="NP_001191465.1">
    <property type="nucleotide sequence ID" value="NM_001204536.1"/>
</dbReference>
<dbReference type="SMR" id="Q9BMX5"/>
<dbReference type="EnsemblMetazoa" id="NM_001204536.1">
    <property type="protein sequence ID" value="NP_001191465.1"/>
    <property type="gene ID" value="LOC100533219"/>
</dbReference>
<dbReference type="GeneID" id="100533219"/>
<dbReference type="OrthoDB" id="10260596at2759"/>
<dbReference type="Proteomes" id="UP000694888">
    <property type="component" value="Unplaced"/>
</dbReference>
<dbReference type="GO" id="GO:1990904">
    <property type="term" value="C:ribonucleoprotein complex"/>
    <property type="evidence" value="ECO:0007669"/>
    <property type="project" value="UniProtKB-KW"/>
</dbReference>
<dbReference type="GO" id="GO:0005840">
    <property type="term" value="C:ribosome"/>
    <property type="evidence" value="ECO:0007669"/>
    <property type="project" value="UniProtKB-KW"/>
</dbReference>
<dbReference type="GO" id="GO:0003735">
    <property type="term" value="F:structural constituent of ribosome"/>
    <property type="evidence" value="ECO:0007669"/>
    <property type="project" value="InterPro"/>
</dbReference>
<dbReference type="GO" id="GO:0006412">
    <property type="term" value="P:translation"/>
    <property type="evidence" value="ECO:0007669"/>
    <property type="project" value="InterPro"/>
</dbReference>
<dbReference type="Gene3D" id="1.20.5.2650">
    <property type="match status" value="1"/>
</dbReference>
<dbReference type="InterPro" id="IPR001377">
    <property type="entry name" value="Ribosomal_eS6"/>
</dbReference>
<dbReference type="InterPro" id="IPR014401">
    <property type="entry name" value="Ribosomal_eS6-like"/>
</dbReference>
<dbReference type="InterPro" id="IPR018282">
    <property type="entry name" value="Ribosomal_eS6_CS"/>
</dbReference>
<dbReference type="PANTHER" id="PTHR11502">
    <property type="entry name" value="40S RIBOSOMAL PROTEIN S6"/>
    <property type="match status" value="1"/>
</dbReference>
<dbReference type="Pfam" id="PF01092">
    <property type="entry name" value="Ribosomal_S6e"/>
    <property type="match status" value="1"/>
</dbReference>
<dbReference type="PIRSF" id="PIRSF002129">
    <property type="entry name" value="Ribosom_S6_euk"/>
    <property type="match status" value="1"/>
</dbReference>
<dbReference type="SMART" id="SM01405">
    <property type="entry name" value="Ribosomal_S6e"/>
    <property type="match status" value="1"/>
</dbReference>
<dbReference type="PROSITE" id="PS00578">
    <property type="entry name" value="RIBOSOMAL_S6E"/>
    <property type="match status" value="1"/>
</dbReference>
<keyword id="KW-0597">Phosphoprotein</keyword>
<keyword id="KW-0687">Ribonucleoprotein</keyword>
<keyword id="KW-0689">Ribosomal protein</keyword>
<organism>
    <name type="scientific">Aplysia californica</name>
    <name type="common">California sea hare</name>
    <dbReference type="NCBI Taxonomy" id="6500"/>
    <lineage>
        <taxon>Eukaryota</taxon>
        <taxon>Metazoa</taxon>
        <taxon>Spiralia</taxon>
        <taxon>Lophotrochozoa</taxon>
        <taxon>Mollusca</taxon>
        <taxon>Gastropoda</taxon>
        <taxon>Heterobranchia</taxon>
        <taxon>Euthyneura</taxon>
        <taxon>Tectipleura</taxon>
        <taxon>Aplysiida</taxon>
        <taxon>Aplysioidea</taxon>
        <taxon>Aplysiidae</taxon>
        <taxon>Aplysia</taxon>
    </lineage>
</organism>
<protein>
    <recommendedName>
        <fullName evidence="3">Small ribosomal subunit protein eS6</fullName>
    </recommendedName>
    <alternativeName>
        <fullName>40S ribosomal protein S6</fullName>
    </alternativeName>
</protein>
<sequence length="247" mass="28527">MKLNISYPATGCQKLIEVDDEKKLRPFYDKRISAELSADCLGDEWKGYVVRISGGNDKQGFPMKQGVLTATRVRLLLDKNHSCYRPRRTGERKRKSVRGCIVDSNLSVLSLVIIKKGEQDIPGLTDKTIPRRLGPKRASKIRKLFNLSKEDDVRQYVVRRPLPERDGKKAKSKAPKIQRLVTPVVLQRKRARMALKKKRVTKKREDHAEYTKLLAQRMKEAKERKMERKRSNSRSKGDSIRESTSKK</sequence>
<evidence type="ECO:0000250" key="1">
    <source>
        <dbReference type="UniProtKB" id="P62753"/>
    </source>
</evidence>
<evidence type="ECO:0000256" key="2">
    <source>
        <dbReference type="SAM" id="MobiDB-lite"/>
    </source>
</evidence>
<evidence type="ECO:0000305" key="3"/>
<feature type="chain" id="PRO_0000137319" description="Small ribosomal subunit protein eS6">
    <location>
        <begin position="1"/>
        <end position="247"/>
    </location>
</feature>
<feature type="region of interest" description="Disordered" evidence="2">
    <location>
        <begin position="194"/>
        <end position="247"/>
    </location>
</feature>
<feature type="compositionally biased region" description="Basic and acidic residues" evidence="2">
    <location>
        <begin position="217"/>
        <end position="247"/>
    </location>
</feature>
<accession>Q9BMX5</accession>